<organism>
    <name type="scientific">Mycoplasmoides gallisepticum (strain R(low / passage 15 / clone 2))</name>
    <name type="common">Mycoplasma gallisepticum</name>
    <dbReference type="NCBI Taxonomy" id="710127"/>
    <lineage>
        <taxon>Bacteria</taxon>
        <taxon>Bacillati</taxon>
        <taxon>Mycoplasmatota</taxon>
        <taxon>Mycoplasmoidales</taxon>
        <taxon>Mycoplasmoidaceae</taxon>
        <taxon>Mycoplasmoides</taxon>
    </lineage>
</organism>
<sequence>MKHITNKAELDQLLSTNKKVVVDFYANWCGPCKILGPIFEEVAQDKKDWTFVKVDVDQANEISSEYEIRSIPTVIFFQDGKMADKRIGFIPKNELKELLK</sequence>
<name>THIO_MYCGA</name>
<keyword id="KW-1015">Disulfide bond</keyword>
<keyword id="KW-0249">Electron transport</keyword>
<keyword id="KW-0676">Redox-active center</keyword>
<keyword id="KW-1185">Reference proteome</keyword>
<keyword id="KW-0813">Transport</keyword>
<proteinExistence type="inferred from homology"/>
<reference key="1">
    <citation type="journal article" date="2002" name="FEMS Microbiol. Lett.">
        <title>Mycoplasma gallisepticum rpoA gene cluster.</title>
        <authorList>
            <person name="Skamrov A.V."/>
            <person name="Feoktistova E.S."/>
            <person name="Gol'dman M.A."/>
            <person name="Bibilashvili R.S."/>
        </authorList>
    </citation>
    <scope>NUCLEOTIDE SEQUENCE [GENOMIC DNA]</scope>
    <source>
        <strain>A5969Var.B</strain>
    </source>
</reference>
<reference key="2">
    <citation type="journal article" date="2003" name="Microbiology">
        <title>The complete genome sequence of the avian pathogen Mycoplasma gallisepticum strain R(low).</title>
        <authorList>
            <person name="Papazisi L."/>
            <person name="Gorton T.S."/>
            <person name="Kutish G."/>
            <person name="Markham P.F."/>
            <person name="Browning G.F."/>
            <person name="Nguyen D.K."/>
            <person name="Swartzell S."/>
            <person name="Madan A."/>
            <person name="Mahairas G."/>
            <person name="Geary S.J."/>
        </authorList>
    </citation>
    <scope>NUCLEOTIDE SEQUENCE [LARGE SCALE GENOMIC DNA]</scope>
    <source>
        <strain>R(low / passage 15 / clone 2)</strain>
    </source>
</reference>
<accession>Q9R6P9</accession>
<protein>
    <recommendedName>
        <fullName>Thioredoxin</fullName>
        <shortName>Trx</shortName>
    </recommendedName>
</protein>
<comment type="function">
    <text evidence="1">Participates in various redox reactions through the reversible oxidation of its active center dithiol to a disulfide and catalyzes dithiol-disulfide exchange reactions.</text>
</comment>
<comment type="similarity">
    <text evidence="3">Belongs to the thioredoxin family.</text>
</comment>
<evidence type="ECO:0000250" key="1"/>
<evidence type="ECO:0000255" key="2">
    <source>
        <dbReference type="PROSITE-ProRule" id="PRU00691"/>
    </source>
</evidence>
<evidence type="ECO:0000305" key="3"/>
<dbReference type="EMBL" id="L35043">
    <property type="protein sequence ID" value="AAF19044.1"/>
    <property type="molecule type" value="Genomic_DNA"/>
</dbReference>
<dbReference type="EMBL" id="AE015450">
    <property type="protein sequence ID" value="AAP56983.2"/>
    <property type="molecule type" value="Genomic_DNA"/>
</dbReference>
<dbReference type="RefSeq" id="WP_011113892.1">
    <property type="nucleotide sequence ID" value="NC_004829.2"/>
</dbReference>
<dbReference type="SMR" id="Q9R6P9"/>
<dbReference type="GeneID" id="93510470"/>
<dbReference type="KEGG" id="mga:MGA_0452"/>
<dbReference type="PATRIC" id="fig|233150.7.peg.710"/>
<dbReference type="HOGENOM" id="CLU_090389_14_6_14"/>
<dbReference type="OrthoDB" id="9790390at2"/>
<dbReference type="Proteomes" id="UP000001418">
    <property type="component" value="Chromosome"/>
</dbReference>
<dbReference type="GO" id="GO:0015035">
    <property type="term" value="F:protein-disulfide reductase activity"/>
    <property type="evidence" value="ECO:0007669"/>
    <property type="project" value="InterPro"/>
</dbReference>
<dbReference type="CDD" id="cd02947">
    <property type="entry name" value="TRX_family"/>
    <property type="match status" value="1"/>
</dbReference>
<dbReference type="FunFam" id="3.40.30.10:FF:000001">
    <property type="entry name" value="Thioredoxin"/>
    <property type="match status" value="1"/>
</dbReference>
<dbReference type="Gene3D" id="3.40.30.10">
    <property type="entry name" value="Glutaredoxin"/>
    <property type="match status" value="1"/>
</dbReference>
<dbReference type="InterPro" id="IPR005746">
    <property type="entry name" value="Thioredoxin"/>
</dbReference>
<dbReference type="InterPro" id="IPR036249">
    <property type="entry name" value="Thioredoxin-like_sf"/>
</dbReference>
<dbReference type="InterPro" id="IPR017937">
    <property type="entry name" value="Thioredoxin_CS"/>
</dbReference>
<dbReference type="InterPro" id="IPR013766">
    <property type="entry name" value="Thioredoxin_domain"/>
</dbReference>
<dbReference type="NCBIfam" id="TIGR01068">
    <property type="entry name" value="thioredoxin"/>
    <property type="match status" value="1"/>
</dbReference>
<dbReference type="PANTHER" id="PTHR46115">
    <property type="entry name" value="THIOREDOXIN-LIKE PROTEIN 1"/>
    <property type="match status" value="1"/>
</dbReference>
<dbReference type="Pfam" id="PF00085">
    <property type="entry name" value="Thioredoxin"/>
    <property type="match status" value="1"/>
</dbReference>
<dbReference type="PIRSF" id="PIRSF000077">
    <property type="entry name" value="Thioredoxin"/>
    <property type="match status" value="1"/>
</dbReference>
<dbReference type="PRINTS" id="PR00421">
    <property type="entry name" value="THIOREDOXIN"/>
</dbReference>
<dbReference type="SUPFAM" id="SSF52833">
    <property type="entry name" value="Thioredoxin-like"/>
    <property type="match status" value="1"/>
</dbReference>
<dbReference type="PROSITE" id="PS00194">
    <property type="entry name" value="THIOREDOXIN_1"/>
    <property type="match status" value="1"/>
</dbReference>
<dbReference type="PROSITE" id="PS51352">
    <property type="entry name" value="THIOREDOXIN_2"/>
    <property type="match status" value="1"/>
</dbReference>
<gene>
    <name type="primary">trxA</name>
    <name type="synonym">trx</name>
    <name type="ordered locus">MYCGA6330</name>
    <name type="ORF">MGA_0452</name>
</gene>
<feature type="chain" id="PRO_0000120112" description="Thioredoxin">
    <location>
        <begin position="1"/>
        <end position="100"/>
    </location>
</feature>
<feature type="domain" description="Thioredoxin" evidence="2">
    <location>
        <begin position="1"/>
        <end position="100"/>
    </location>
</feature>
<feature type="disulfide bond" description="Redox-active" evidence="2">
    <location>
        <begin position="29"/>
        <end position="32"/>
    </location>
</feature>
<feature type="sequence conflict" description="In Ref. 1; AAF19044." evidence="3" ref="1">
    <original>S</original>
    <variation>T</variation>
    <location>
        <position position="15"/>
    </location>
</feature>
<feature type="sequence conflict" description="In Ref. 1; AAF19044." evidence="3" ref="1">
    <original>V</original>
    <variation>I</variation>
    <location>
        <position position="74"/>
    </location>
</feature>
<feature type="sequence conflict" description="In Ref. 1; AAF19044." evidence="3" ref="1">
    <original>R</original>
    <variation>I</variation>
    <location>
        <position position="86"/>
    </location>
</feature>